<reference key="1">
    <citation type="journal article" date="1997" name="Biochim. Biophys. Acta">
        <title>Cloning and expression analysis of mouse Cclp1, a new gene encoding a coiled-coil-like protein.</title>
        <authorList>
            <person name="Noben-Trauth K."/>
            <person name="Naggert J.K."/>
            <person name="Nishina P.M."/>
        </authorList>
    </citation>
    <scope>NUCLEOTIDE SEQUENCE [MRNA] (ISOFORM 1)</scope>
    <scope>TISSUE SPECIFICITY</scope>
    <scope>DEVELOPMENTAL STAGE</scope>
</reference>
<reference key="2">
    <citation type="journal article" date="2005" name="Science">
        <title>The transcriptional landscape of the mammalian genome.</title>
        <authorList>
            <person name="Carninci P."/>
            <person name="Kasukawa T."/>
            <person name="Katayama S."/>
            <person name="Gough J."/>
            <person name="Frith M.C."/>
            <person name="Maeda N."/>
            <person name="Oyama R."/>
            <person name="Ravasi T."/>
            <person name="Lenhard B."/>
            <person name="Wells C."/>
            <person name="Kodzius R."/>
            <person name="Shimokawa K."/>
            <person name="Bajic V.B."/>
            <person name="Brenner S.E."/>
            <person name="Batalov S."/>
            <person name="Forrest A.R."/>
            <person name="Zavolan M."/>
            <person name="Davis M.J."/>
            <person name="Wilming L.G."/>
            <person name="Aidinis V."/>
            <person name="Allen J.E."/>
            <person name="Ambesi-Impiombato A."/>
            <person name="Apweiler R."/>
            <person name="Aturaliya R.N."/>
            <person name="Bailey T.L."/>
            <person name="Bansal M."/>
            <person name="Baxter L."/>
            <person name="Beisel K.W."/>
            <person name="Bersano T."/>
            <person name="Bono H."/>
            <person name="Chalk A.M."/>
            <person name="Chiu K.P."/>
            <person name="Choudhary V."/>
            <person name="Christoffels A."/>
            <person name="Clutterbuck D.R."/>
            <person name="Crowe M.L."/>
            <person name="Dalla E."/>
            <person name="Dalrymple B.P."/>
            <person name="de Bono B."/>
            <person name="Della Gatta G."/>
            <person name="di Bernardo D."/>
            <person name="Down T."/>
            <person name="Engstrom P."/>
            <person name="Fagiolini M."/>
            <person name="Faulkner G."/>
            <person name="Fletcher C.F."/>
            <person name="Fukushima T."/>
            <person name="Furuno M."/>
            <person name="Futaki S."/>
            <person name="Gariboldi M."/>
            <person name="Georgii-Hemming P."/>
            <person name="Gingeras T.R."/>
            <person name="Gojobori T."/>
            <person name="Green R.E."/>
            <person name="Gustincich S."/>
            <person name="Harbers M."/>
            <person name="Hayashi Y."/>
            <person name="Hensch T.K."/>
            <person name="Hirokawa N."/>
            <person name="Hill D."/>
            <person name="Huminiecki L."/>
            <person name="Iacono M."/>
            <person name="Ikeo K."/>
            <person name="Iwama A."/>
            <person name="Ishikawa T."/>
            <person name="Jakt M."/>
            <person name="Kanapin A."/>
            <person name="Katoh M."/>
            <person name="Kawasawa Y."/>
            <person name="Kelso J."/>
            <person name="Kitamura H."/>
            <person name="Kitano H."/>
            <person name="Kollias G."/>
            <person name="Krishnan S.P."/>
            <person name="Kruger A."/>
            <person name="Kummerfeld S.K."/>
            <person name="Kurochkin I.V."/>
            <person name="Lareau L.F."/>
            <person name="Lazarevic D."/>
            <person name="Lipovich L."/>
            <person name="Liu J."/>
            <person name="Liuni S."/>
            <person name="McWilliam S."/>
            <person name="Madan Babu M."/>
            <person name="Madera M."/>
            <person name="Marchionni L."/>
            <person name="Matsuda H."/>
            <person name="Matsuzawa S."/>
            <person name="Miki H."/>
            <person name="Mignone F."/>
            <person name="Miyake S."/>
            <person name="Morris K."/>
            <person name="Mottagui-Tabar S."/>
            <person name="Mulder N."/>
            <person name="Nakano N."/>
            <person name="Nakauchi H."/>
            <person name="Ng P."/>
            <person name="Nilsson R."/>
            <person name="Nishiguchi S."/>
            <person name="Nishikawa S."/>
            <person name="Nori F."/>
            <person name="Ohara O."/>
            <person name="Okazaki Y."/>
            <person name="Orlando V."/>
            <person name="Pang K.C."/>
            <person name="Pavan W.J."/>
            <person name="Pavesi G."/>
            <person name="Pesole G."/>
            <person name="Petrovsky N."/>
            <person name="Piazza S."/>
            <person name="Reed J."/>
            <person name="Reid J.F."/>
            <person name="Ring B.Z."/>
            <person name="Ringwald M."/>
            <person name="Rost B."/>
            <person name="Ruan Y."/>
            <person name="Salzberg S.L."/>
            <person name="Sandelin A."/>
            <person name="Schneider C."/>
            <person name="Schoenbach C."/>
            <person name="Sekiguchi K."/>
            <person name="Semple C.A."/>
            <person name="Seno S."/>
            <person name="Sessa L."/>
            <person name="Sheng Y."/>
            <person name="Shibata Y."/>
            <person name="Shimada H."/>
            <person name="Shimada K."/>
            <person name="Silva D."/>
            <person name="Sinclair B."/>
            <person name="Sperling S."/>
            <person name="Stupka E."/>
            <person name="Sugiura K."/>
            <person name="Sultana R."/>
            <person name="Takenaka Y."/>
            <person name="Taki K."/>
            <person name="Tammoja K."/>
            <person name="Tan S.L."/>
            <person name="Tang S."/>
            <person name="Taylor M.S."/>
            <person name="Tegner J."/>
            <person name="Teichmann S.A."/>
            <person name="Ueda H.R."/>
            <person name="van Nimwegen E."/>
            <person name="Verardo R."/>
            <person name="Wei C.L."/>
            <person name="Yagi K."/>
            <person name="Yamanishi H."/>
            <person name="Zabarovsky E."/>
            <person name="Zhu S."/>
            <person name="Zimmer A."/>
            <person name="Hide W."/>
            <person name="Bult C."/>
            <person name="Grimmond S.M."/>
            <person name="Teasdale R.D."/>
            <person name="Liu E.T."/>
            <person name="Brusic V."/>
            <person name="Quackenbush J."/>
            <person name="Wahlestedt C."/>
            <person name="Mattick J.S."/>
            <person name="Hume D.A."/>
            <person name="Kai C."/>
            <person name="Sasaki D."/>
            <person name="Tomaru Y."/>
            <person name="Fukuda S."/>
            <person name="Kanamori-Katayama M."/>
            <person name="Suzuki M."/>
            <person name="Aoki J."/>
            <person name="Arakawa T."/>
            <person name="Iida J."/>
            <person name="Imamura K."/>
            <person name="Itoh M."/>
            <person name="Kato T."/>
            <person name="Kawaji H."/>
            <person name="Kawagashira N."/>
            <person name="Kawashima T."/>
            <person name="Kojima M."/>
            <person name="Kondo S."/>
            <person name="Konno H."/>
            <person name="Nakano K."/>
            <person name="Ninomiya N."/>
            <person name="Nishio T."/>
            <person name="Okada M."/>
            <person name="Plessy C."/>
            <person name="Shibata K."/>
            <person name="Shiraki T."/>
            <person name="Suzuki S."/>
            <person name="Tagami M."/>
            <person name="Waki K."/>
            <person name="Watahiki A."/>
            <person name="Okamura-Oho Y."/>
            <person name="Suzuki H."/>
            <person name="Kawai J."/>
            <person name="Hayashizaki Y."/>
        </authorList>
    </citation>
    <scope>NUCLEOTIDE SEQUENCE [LARGE SCALE MRNA] (ISOFORM 3)</scope>
    <source>
        <strain>C57BL/6J</strain>
        <tissue>Urinary bladder</tissue>
    </source>
</reference>
<reference key="3">
    <citation type="journal article" date="2004" name="Genome Res.">
        <title>The status, quality, and expansion of the NIH full-length cDNA project: the Mammalian Gene Collection (MGC).</title>
        <authorList>
            <consortium name="The MGC Project Team"/>
        </authorList>
    </citation>
    <scope>NUCLEOTIDE SEQUENCE [LARGE SCALE MRNA] (ISOFORM 4)</scope>
    <scope>NUCLEOTIDE SEQUENCE [LARGE SCALE MRNA] OF 336-882 (ISOFORM 2)</scope>
    <source>
        <strain>FVB/N</strain>
        <tissue>Mammary tumor</tissue>
        <tissue>Oocyte</tissue>
    </source>
</reference>
<reference key="4">
    <citation type="journal article" date="2007" name="Proc. Natl. Acad. Sci. U.S.A.">
        <title>Large-scale phosphorylation analysis of mouse liver.</title>
        <authorList>
            <person name="Villen J."/>
            <person name="Beausoleil S.A."/>
            <person name="Gerber S.A."/>
            <person name="Gygi S.P."/>
        </authorList>
    </citation>
    <scope>PHOSPHORYLATION [LARGE SCALE ANALYSIS] AT SER-386</scope>
    <scope>IDENTIFICATION BY MASS SPECTROMETRY [LARGE SCALE ANALYSIS]</scope>
    <source>
        <tissue>Liver</tissue>
    </source>
</reference>
<reference key="5">
    <citation type="journal article" date="2010" name="Cell">
        <title>A tissue-specific atlas of mouse protein phosphorylation and expression.</title>
        <authorList>
            <person name="Huttlin E.L."/>
            <person name="Jedrychowski M.P."/>
            <person name="Elias J.E."/>
            <person name="Goswami T."/>
            <person name="Rad R."/>
            <person name="Beausoleil S.A."/>
            <person name="Villen J."/>
            <person name="Haas W."/>
            <person name="Sowa M.E."/>
            <person name="Gygi S.P."/>
        </authorList>
    </citation>
    <scope>PHOSPHORYLATION [LARGE SCALE ANALYSIS] AT SER-386 AND SER-502</scope>
    <scope>IDENTIFICATION BY MASS SPECTROMETRY [LARGE SCALE ANALYSIS]</scope>
    <source>
        <tissue>Brain</tissue>
        <tissue>Brown adipose tissue</tissue>
        <tissue>Kidney</tissue>
        <tissue>Liver</tissue>
        <tissue>Lung</tissue>
        <tissue>Spleen</tissue>
        <tissue>Testis</tissue>
    </source>
</reference>
<accession>O35711</accession>
<accession>Q497W6</accession>
<accession>Q7TMG4</accession>
<accession>Q8CBS6</accession>
<accession>Q99KX6</accession>
<organism>
    <name type="scientific">Mus musculus</name>
    <name type="common">Mouse</name>
    <dbReference type="NCBI Taxonomy" id="10090"/>
    <lineage>
        <taxon>Eukaryota</taxon>
        <taxon>Metazoa</taxon>
        <taxon>Chordata</taxon>
        <taxon>Craniata</taxon>
        <taxon>Vertebrata</taxon>
        <taxon>Euteleostomi</taxon>
        <taxon>Mammalia</taxon>
        <taxon>Eutheria</taxon>
        <taxon>Euarchontoglires</taxon>
        <taxon>Glires</taxon>
        <taxon>Rodentia</taxon>
        <taxon>Myomorpha</taxon>
        <taxon>Muroidea</taxon>
        <taxon>Muridae</taxon>
        <taxon>Murinae</taxon>
        <taxon>Mus</taxon>
        <taxon>Mus</taxon>
    </lineage>
</organism>
<proteinExistence type="evidence at protein level"/>
<protein>
    <recommendedName>
        <fullName>Liprin-beta-2</fullName>
    </recommendedName>
    <alternativeName>
        <fullName>Coiled-coil-like protein 1</fullName>
    </alternativeName>
    <alternativeName>
        <fullName>Protein tyrosine phosphatase receptor type f polypeptide-interacting protein-binding protein 2</fullName>
        <shortName>PTPRF-interacting protein-binding protein 2</shortName>
    </alternativeName>
</protein>
<dbReference type="EMBL" id="U79024">
    <property type="protein sequence ID" value="AAB61902.1"/>
    <property type="molecule type" value="mRNA"/>
</dbReference>
<dbReference type="EMBL" id="AK035364">
    <property type="protein sequence ID" value="BAC29047.1"/>
    <property type="molecule type" value="mRNA"/>
</dbReference>
<dbReference type="EMBL" id="BC003966">
    <property type="protein sequence ID" value="AAH03966.1"/>
    <property type="molecule type" value="mRNA"/>
</dbReference>
<dbReference type="EMBL" id="BC055935">
    <property type="protein sequence ID" value="AAH55935.1"/>
    <property type="molecule type" value="mRNA"/>
</dbReference>
<dbReference type="EMBL" id="BC100346">
    <property type="protein sequence ID" value="AAI00347.1"/>
    <property type="molecule type" value="mRNA"/>
</dbReference>
<dbReference type="CCDS" id="CCDS21691.1">
    <molecule id="O35711-1"/>
</dbReference>
<dbReference type="CCDS" id="CCDS52356.1">
    <molecule id="O35711-4"/>
</dbReference>
<dbReference type="RefSeq" id="NP_001157029.1">
    <molecule id="O35711-4"/>
    <property type="nucleotide sequence ID" value="NM_001163557.2"/>
</dbReference>
<dbReference type="RefSeq" id="NP_001404077.1">
    <molecule id="O35711-2"/>
    <property type="nucleotide sequence ID" value="NM_001417148.1"/>
</dbReference>
<dbReference type="RefSeq" id="NP_032931.2">
    <property type="nucleotide sequence ID" value="NM_008905.2"/>
</dbReference>
<dbReference type="SMR" id="O35711"/>
<dbReference type="FunCoup" id="O35711">
    <property type="interactions" value="152"/>
</dbReference>
<dbReference type="IntAct" id="O35711">
    <property type="interactions" value="1"/>
</dbReference>
<dbReference type="MINT" id="O35711"/>
<dbReference type="STRING" id="10090.ENSMUSP00000095738"/>
<dbReference type="GlyGen" id="O35711">
    <property type="glycosylation" value="4 sites, 2 N-linked glycans (2 sites)"/>
</dbReference>
<dbReference type="iPTMnet" id="O35711"/>
<dbReference type="PhosphoSitePlus" id="O35711"/>
<dbReference type="jPOST" id="O35711"/>
<dbReference type="PaxDb" id="10090-ENSMUSP00000095738"/>
<dbReference type="PeptideAtlas" id="O35711"/>
<dbReference type="ProteomicsDB" id="290127">
    <molecule id="O35711-1"/>
</dbReference>
<dbReference type="ProteomicsDB" id="290128">
    <molecule id="O35711-2"/>
</dbReference>
<dbReference type="ProteomicsDB" id="290129">
    <molecule id="O35711-3"/>
</dbReference>
<dbReference type="ProteomicsDB" id="290130">
    <molecule id="O35711-4"/>
</dbReference>
<dbReference type="Antibodypedia" id="1168">
    <property type="antibodies" value="133 antibodies from 24 providers"/>
</dbReference>
<dbReference type="DNASU" id="19024"/>
<dbReference type="Ensembl" id="ENSMUST00000098134.5">
    <molecule id="O35711-4"/>
    <property type="protein sequence ID" value="ENSMUSP00000095738.4"/>
    <property type="gene ID" value="ENSMUSG00000036528.17"/>
</dbReference>
<dbReference type="GeneID" id="19024"/>
<dbReference type="KEGG" id="mmu:19024"/>
<dbReference type="UCSC" id="uc009jbd.2">
    <molecule id="O35711-3"/>
    <property type="organism name" value="mouse"/>
</dbReference>
<dbReference type="UCSC" id="uc009jbf.1">
    <molecule id="O35711-4"/>
    <property type="organism name" value="mouse"/>
</dbReference>
<dbReference type="UCSC" id="uc009jbh.2">
    <molecule id="O35711-2"/>
    <property type="organism name" value="mouse"/>
</dbReference>
<dbReference type="AGR" id="MGI:894649"/>
<dbReference type="CTD" id="8495"/>
<dbReference type="MGI" id="MGI:894649">
    <property type="gene designation" value="Ppfibp2"/>
</dbReference>
<dbReference type="VEuPathDB" id="HostDB:ENSMUSG00000036528"/>
<dbReference type="eggNOG" id="KOG1899">
    <property type="taxonomic scope" value="Eukaryota"/>
</dbReference>
<dbReference type="GeneTree" id="ENSGT01050000244951"/>
<dbReference type="InParanoid" id="O35711"/>
<dbReference type="PhylomeDB" id="O35711"/>
<dbReference type="TreeFam" id="TF314207"/>
<dbReference type="Reactome" id="R-MMU-388844">
    <property type="pathway name" value="Receptor-type tyrosine-protein phosphatases"/>
</dbReference>
<dbReference type="BioGRID-ORCS" id="19024">
    <property type="hits" value="1 hit in 77 CRISPR screens"/>
</dbReference>
<dbReference type="ChiTaRS" id="Ppfibp2">
    <property type="organism name" value="mouse"/>
</dbReference>
<dbReference type="PRO" id="PR:O35711"/>
<dbReference type="Proteomes" id="UP000000589">
    <property type="component" value="Chromosome 7"/>
</dbReference>
<dbReference type="RNAct" id="O35711">
    <property type="molecule type" value="protein"/>
</dbReference>
<dbReference type="Bgee" id="ENSMUSG00000036528">
    <property type="expression patterns" value="Expressed in urinary bladder urothelium and 219 other cell types or tissues"/>
</dbReference>
<dbReference type="ExpressionAtlas" id="O35711">
    <property type="expression patterns" value="baseline and differential"/>
</dbReference>
<dbReference type="GO" id="GO:0098793">
    <property type="term" value="C:presynapse"/>
    <property type="evidence" value="ECO:0007669"/>
    <property type="project" value="Ensembl"/>
</dbReference>
<dbReference type="GO" id="GO:0042802">
    <property type="term" value="F:identical protein binding"/>
    <property type="evidence" value="ECO:0000250"/>
    <property type="project" value="UniProtKB"/>
</dbReference>
<dbReference type="CDD" id="cd09563">
    <property type="entry name" value="SAM_liprin-beta1_2_repeat1"/>
    <property type="match status" value="1"/>
</dbReference>
<dbReference type="CDD" id="cd09566">
    <property type="entry name" value="SAM_liprin-beta1_2_repeat2"/>
    <property type="match status" value="1"/>
</dbReference>
<dbReference type="CDD" id="cd09569">
    <property type="entry name" value="SAM_liprin-beta1_2_repeat3"/>
    <property type="match status" value="1"/>
</dbReference>
<dbReference type="FunFam" id="1.10.150.50:FF:000005">
    <property type="entry name" value="Liprin-beta-1 isoform 1"/>
    <property type="match status" value="1"/>
</dbReference>
<dbReference type="FunFam" id="1.10.150.50:FF:000007">
    <property type="entry name" value="Liprin-beta-1 isoform 1"/>
    <property type="match status" value="1"/>
</dbReference>
<dbReference type="FunFam" id="1.10.150.50:FF:000017">
    <property type="entry name" value="Liprin-beta-1 isoform 1"/>
    <property type="match status" value="1"/>
</dbReference>
<dbReference type="Gene3D" id="1.10.150.50">
    <property type="entry name" value="Transcription Factor, Ets-1"/>
    <property type="match status" value="3"/>
</dbReference>
<dbReference type="InterPro" id="IPR029515">
    <property type="entry name" value="Liprin"/>
</dbReference>
<dbReference type="InterPro" id="IPR037617">
    <property type="entry name" value="Liprin-beta_SAM_rpt_1"/>
</dbReference>
<dbReference type="InterPro" id="IPR037618">
    <property type="entry name" value="Liprin-beta_SAM_rpt_2"/>
</dbReference>
<dbReference type="InterPro" id="IPR037619">
    <property type="entry name" value="Liprin-beta_SAM_rpt_3"/>
</dbReference>
<dbReference type="InterPro" id="IPR001660">
    <property type="entry name" value="SAM"/>
</dbReference>
<dbReference type="InterPro" id="IPR013761">
    <property type="entry name" value="SAM/pointed_sf"/>
</dbReference>
<dbReference type="PANTHER" id="PTHR12587">
    <property type="entry name" value="LAR INTERACTING PROTEIN LIP -RELATED PROTEIN"/>
    <property type="match status" value="1"/>
</dbReference>
<dbReference type="PANTHER" id="PTHR12587:SF18">
    <property type="entry name" value="LIPRIN-BETA-2"/>
    <property type="match status" value="1"/>
</dbReference>
<dbReference type="Pfam" id="PF00536">
    <property type="entry name" value="SAM_1"/>
    <property type="match status" value="2"/>
</dbReference>
<dbReference type="Pfam" id="PF07647">
    <property type="entry name" value="SAM_2"/>
    <property type="match status" value="1"/>
</dbReference>
<dbReference type="SMART" id="SM00454">
    <property type="entry name" value="SAM"/>
    <property type="match status" value="3"/>
</dbReference>
<dbReference type="SUPFAM" id="SSF47769">
    <property type="entry name" value="SAM/Pointed domain"/>
    <property type="match status" value="3"/>
</dbReference>
<dbReference type="PROSITE" id="PS50105">
    <property type="entry name" value="SAM_DOMAIN"/>
    <property type="match status" value="3"/>
</dbReference>
<feature type="chain" id="PRO_0000191037" description="Liprin-beta-2">
    <location>
        <begin position="1"/>
        <end position="882"/>
    </location>
</feature>
<feature type="domain" description="SAM 1" evidence="3">
    <location>
        <begin position="564"/>
        <end position="628"/>
    </location>
</feature>
<feature type="domain" description="SAM 2" evidence="3">
    <location>
        <begin position="636"/>
        <end position="699"/>
    </location>
</feature>
<feature type="domain" description="SAM 3" evidence="3">
    <location>
        <begin position="724"/>
        <end position="789"/>
    </location>
</feature>
<feature type="region of interest" description="Disordered" evidence="4">
    <location>
        <begin position="339"/>
        <end position="554"/>
    </location>
</feature>
<feature type="coiled-coil region" evidence="2">
    <location>
        <begin position="101"/>
        <end position="303"/>
    </location>
</feature>
<feature type="compositionally biased region" description="Basic and acidic residues" evidence="4">
    <location>
        <begin position="388"/>
        <end position="399"/>
    </location>
</feature>
<feature type="compositionally biased region" description="Polar residues" evidence="4">
    <location>
        <begin position="442"/>
        <end position="457"/>
    </location>
</feature>
<feature type="compositionally biased region" description="Polar residues" evidence="4">
    <location>
        <begin position="481"/>
        <end position="495"/>
    </location>
</feature>
<feature type="compositionally biased region" description="Basic residues" evidence="4">
    <location>
        <begin position="502"/>
        <end position="515"/>
    </location>
</feature>
<feature type="modified residue" description="Phosphoserine" evidence="2">
    <location>
        <position position="328"/>
    </location>
</feature>
<feature type="modified residue" description="Phosphoserine" evidence="2">
    <location>
        <position position="362"/>
    </location>
</feature>
<feature type="modified residue" description="Phosphoserine" evidence="9 10">
    <location>
        <position position="386"/>
    </location>
</feature>
<feature type="modified residue" description="Phosphoserine" evidence="10">
    <location>
        <position position="502"/>
    </location>
</feature>
<feature type="modified residue" description="Phosphoserine" evidence="2">
    <location>
        <position position="518"/>
    </location>
</feature>
<feature type="splice variant" id="VSP_009401" description="In isoform 3." evidence="7">
    <original>VLTDQVEAQGEKIRDLEVCLEGHQVKLNAAEEMLQQELLSRTSLETQKLDLMTEVSELKLKLVGMEKEQKEQEE</original>
    <variation>SLLPQLPQERDAQCESSVGKRWEPIYLSCAAEHLPLHTSSPVGRLKLGASNEQNGPRHPGACKSAKGDEYILCH</variation>
    <location>
        <begin position="127"/>
        <end position="200"/>
    </location>
</feature>
<feature type="splice variant" id="VSP_009402" description="In isoform 3." evidence="7">
    <location>
        <begin position="201"/>
        <end position="882"/>
    </location>
</feature>
<feature type="splice variant" id="VSP_009403" description="In isoform 2 and isoform 4." evidence="6">
    <location>
        <begin position="459"/>
        <end position="469"/>
    </location>
</feature>
<feature type="splice variant" id="VSP_026136" description="In isoform 4." evidence="6">
    <original>QVGQIS</original>
    <variation>QMAPSEGTVTQIGLLSQDIHRLTTLLSQDQLLNDPPGCP</variation>
    <location>
        <begin position="877"/>
        <end position="882"/>
    </location>
</feature>
<feature type="sequence conflict" description="In Ref. 1; AAB61902." evidence="8" ref="1">
    <original>D</original>
    <variation>G</variation>
    <location>
        <position position="4"/>
    </location>
</feature>
<feature type="sequence conflict" description="In Ref. 1; AAB61902." evidence="8" ref="1">
    <original>R</original>
    <variation>G</variation>
    <location>
        <position position="470"/>
    </location>
</feature>
<feature type="sequence conflict" description="In Ref. 3; AAH03966." evidence="8" ref="3">
    <location>
        <position position="699"/>
    </location>
</feature>
<keyword id="KW-0025">Alternative splicing</keyword>
<keyword id="KW-0175">Coiled coil</keyword>
<keyword id="KW-0597">Phosphoprotein</keyword>
<keyword id="KW-1185">Reference proteome</keyword>
<keyword id="KW-0677">Repeat</keyword>
<gene>
    <name type="primary">Ppfibp2</name>
    <name type="synonym">Cclp1</name>
</gene>
<sequence length="882" mass="98753">MTSDASHMLEAALEQMDGIIAGTKTAADFSDGTCEPGLSPPSTCLNSMPVLHLIEDLRLALEMLALPQEREALLSQVPGPTATYIKEWFEDSLSQVNHHGAASNETYQERLARLEGDKESLILQVSVLTDQVEAQGEKIRDLEVCLEGHQVKLNAAEEMLQQELLSRTSLETQKLDLMTEVSELKLKLVGMEKEQKEQEEKQRKAEELLQELKHLKIKVEELENERNQYEWELKATKAEVAQLQEQVALKDAEIERLHSQLSRSAALHSDHAERDQEIHRLKMGMETLLVANEDKDRRIEELTGLLNKYLRVKEIVMATQGPSERTLSINEDEIEGSFRKWNTTNKSPEEVPKQEISPRCSSPTPGPPPLPQKSLESRAQKKLSCSLEDLRRESGDKCVDGNQLSPVGEPKDSSFLAEQKYPTLPGKLSGATPNGEAAKSPPTASLQPDSSGSSQPKLNRGWSVSAPVLRDTEGGWEDIVSSASSGTESSPQSPVTPDGKRSPKGIKKFWGKIRRTQSGNFNTDAPGMAEFRRGGLRATAGPRLSRTRDTKGQKCDANAPFAQWSTERVCTWMEDFGLGQYVIFARQWVTSGHTLLTATPQDMEKELGIKHPLHRKKLVLAVKAINAKQEETSALLDHIWVTRWLDDIGLPQYKDQFHESRVDGRMLQYLTVNDLLFLKVTSQLHHLSIKCAIHVLHVNKFNPNCLHRRPADESNLSPSEVVQWSNHRVMEWLRSVDLAEYAPNLRGSGVHGGLIILEPRFTGDTLAMLLNIPPQKTLLRRHLTTKFNALIGPEAEQEKRDKMASPAYTPLTTTAKVRPRKLGFSHFGNMRKKKFDESTDYICPMEPGDAVSDSHRVYGVYRGLSPLDNHELDGLDQVGQIS</sequence>
<evidence type="ECO:0000250" key="1"/>
<evidence type="ECO:0000250" key="2">
    <source>
        <dbReference type="UniProtKB" id="Q8ND30"/>
    </source>
</evidence>
<evidence type="ECO:0000255" key="3">
    <source>
        <dbReference type="PROSITE-ProRule" id="PRU00184"/>
    </source>
</evidence>
<evidence type="ECO:0000256" key="4">
    <source>
        <dbReference type="SAM" id="MobiDB-lite"/>
    </source>
</evidence>
<evidence type="ECO:0000269" key="5">
    <source>
    </source>
</evidence>
<evidence type="ECO:0000303" key="6">
    <source>
    </source>
</evidence>
<evidence type="ECO:0000303" key="7">
    <source>
    </source>
</evidence>
<evidence type="ECO:0000305" key="8"/>
<evidence type="ECO:0007744" key="9">
    <source>
    </source>
</evidence>
<evidence type="ECO:0007744" key="10">
    <source>
    </source>
</evidence>
<name>LIPB2_MOUSE</name>
<comment type="function">
    <text evidence="2">May regulate the disassembly of focal adhesions. Did not bind receptor-like tyrosine phosphatases type 2A (By similarity).</text>
</comment>
<comment type="subunit">
    <text evidence="2">Forms homodimers and heterodimers.</text>
</comment>
<comment type="alternative products">
    <event type="alternative splicing"/>
    <isoform>
        <id>O35711-1</id>
        <name>1</name>
        <sequence type="displayed"/>
    </isoform>
    <isoform>
        <id>O35711-2</id>
        <name>2</name>
        <sequence type="described" ref="VSP_009403"/>
    </isoform>
    <isoform>
        <id>O35711-3</id>
        <name>3</name>
        <sequence type="described" ref="VSP_009401 VSP_009402"/>
    </isoform>
    <isoform>
        <id>O35711-4</id>
        <name>4</name>
        <sequence type="described" ref="VSP_009403 VSP_026136"/>
    </isoform>
</comment>
<comment type="tissue specificity">
    <text evidence="5">Expressed widely. Strong expression in liver, kidney, intestine, heart, lung and testis. Low expression in brain and thymus.</text>
</comment>
<comment type="developmental stage">
    <text evidence="5">Found at 10.5 dpc through 16.5 dpc.</text>
</comment>
<comment type="domain">
    <text evidence="1">The N-terminal coiled coil regions mediate homodimerization preferentially and heterodimerization type beta/beta. The C-terminal, non-coiled coil regions mediate heterodimerization type beta/alpha (By similarity).</text>
</comment>
<comment type="miscellaneous">
    <molecule>Isoform 3</molecule>
    <text evidence="8">Due to intron retention.</text>
</comment>
<comment type="similarity">
    <text evidence="8">Belongs to the liprin family. Liprin-beta subfamily.</text>
</comment>